<reference key="1">
    <citation type="journal article" date="1992" name="Nature">
        <title>The complete DNA sequence of yeast chromosome III.</title>
        <authorList>
            <person name="Oliver S.G."/>
            <person name="van der Aart Q.J.M."/>
            <person name="Agostoni-Carbone M.L."/>
            <person name="Aigle M."/>
            <person name="Alberghina L."/>
            <person name="Alexandraki D."/>
            <person name="Antoine G."/>
            <person name="Anwar R."/>
            <person name="Ballesta J.P.G."/>
            <person name="Benit P."/>
            <person name="Berben G."/>
            <person name="Bergantino E."/>
            <person name="Biteau N."/>
            <person name="Bolle P.-A."/>
            <person name="Bolotin-Fukuhara M."/>
            <person name="Brown A."/>
            <person name="Brown A.J.P."/>
            <person name="Buhler J.-M."/>
            <person name="Carcano C."/>
            <person name="Carignani G."/>
            <person name="Cederberg H."/>
            <person name="Chanet R."/>
            <person name="Contreras R."/>
            <person name="Crouzet M."/>
            <person name="Daignan-Fornier B."/>
            <person name="Defoor E."/>
            <person name="Delgado M.D."/>
            <person name="Demolder J."/>
            <person name="Doira C."/>
            <person name="Dubois E."/>
            <person name="Dujon B."/>
            <person name="Duesterhoeft A."/>
            <person name="Erdmann D."/>
            <person name="Esteban M."/>
            <person name="Fabre F."/>
            <person name="Fairhead C."/>
            <person name="Faye G."/>
            <person name="Feldmann H."/>
            <person name="Fiers W."/>
            <person name="Francingues-Gaillard M.-C."/>
            <person name="Franco L."/>
            <person name="Frontali L."/>
            <person name="Fukuhara H."/>
            <person name="Fuller L.J."/>
            <person name="Galland P."/>
            <person name="Gent M.E."/>
            <person name="Gigot D."/>
            <person name="Gilliquet V."/>
            <person name="Glansdorff N."/>
            <person name="Goffeau A."/>
            <person name="Grenson M."/>
            <person name="Grisanti P."/>
            <person name="Grivell L.A."/>
            <person name="de Haan M."/>
            <person name="Haasemann M."/>
            <person name="Hatat D."/>
            <person name="Hoenicka J."/>
            <person name="Hegemann J.H."/>
            <person name="Herbert C.J."/>
            <person name="Hilger F."/>
            <person name="Hohmann S."/>
            <person name="Hollenberg C.P."/>
            <person name="Huse K."/>
            <person name="Iborra F."/>
            <person name="Indge K.J."/>
            <person name="Isono K."/>
            <person name="Jacq C."/>
            <person name="Jacquet M."/>
            <person name="James C.M."/>
            <person name="Jauniaux J.-C."/>
            <person name="Jia Y."/>
            <person name="Jimenez A."/>
            <person name="Kelly A."/>
            <person name="Kleinhans U."/>
            <person name="Kreisl P."/>
            <person name="Lanfranchi G."/>
            <person name="Lewis C."/>
            <person name="van der Linden C.G."/>
            <person name="Lucchini G."/>
            <person name="Lutzenkirchen K."/>
            <person name="Maat M.J."/>
            <person name="Mallet L."/>
            <person name="Mannhaupt G."/>
            <person name="Martegani E."/>
            <person name="Mathieu A."/>
            <person name="Maurer C.T.C."/>
            <person name="McConnell D."/>
            <person name="McKee R.A."/>
            <person name="Messenguy F."/>
            <person name="Mewes H.-W."/>
            <person name="Molemans F."/>
            <person name="Montague M.A."/>
            <person name="Muzi Falconi M."/>
            <person name="Navas L."/>
            <person name="Newlon C.S."/>
            <person name="Noone D."/>
            <person name="Pallier C."/>
            <person name="Panzeri L."/>
            <person name="Pearson B.M."/>
            <person name="Perea J."/>
            <person name="Philippsen P."/>
            <person name="Pierard A."/>
            <person name="Planta R.J."/>
            <person name="Plevani P."/>
            <person name="Poetsch B."/>
            <person name="Pohl F.M."/>
            <person name="Purnelle B."/>
            <person name="Ramezani Rad M."/>
            <person name="Rasmussen S.W."/>
            <person name="Raynal A."/>
            <person name="Remacha M.A."/>
            <person name="Richterich P."/>
            <person name="Roberts A.B."/>
            <person name="Rodriguez F."/>
            <person name="Sanz E."/>
            <person name="Schaaff-Gerstenschlaeger I."/>
            <person name="Scherens B."/>
            <person name="Schweitzer B."/>
            <person name="Shu Y."/>
            <person name="Skala J."/>
            <person name="Slonimski P.P."/>
            <person name="Sor F."/>
            <person name="Soustelle C."/>
            <person name="Spiegelberg R."/>
            <person name="Stateva L.I."/>
            <person name="Steensma H.Y."/>
            <person name="Steiner S."/>
            <person name="Thierry A."/>
            <person name="Thireos G."/>
            <person name="Tzermia M."/>
            <person name="Urrestarazu L.A."/>
            <person name="Valle G."/>
            <person name="Vetter I."/>
            <person name="van Vliet-Reedijk J.C."/>
            <person name="Voet M."/>
            <person name="Volckaert G."/>
            <person name="Vreken P."/>
            <person name="Wang H."/>
            <person name="Warmington J.R."/>
            <person name="von Wettstein D."/>
            <person name="Wicksteed B.L."/>
            <person name="Wilson C."/>
            <person name="Wurst H."/>
            <person name="Xu G."/>
            <person name="Yoshikawa A."/>
            <person name="Zimmermann F.K."/>
            <person name="Sgouros J.G."/>
        </authorList>
    </citation>
    <scope>NUCLEOTIDE SEQUENCE [LARGE SCALE GENOMIC DNA]</scope>
    <source>
        <strain>ATCC 204508 / S288c</strain>
    </source>
</reference>
<reference key="2">
    <citation type="journal article" date="2014" name="G3 (Bethesda)">
        <title>The reference genome sequence of Saccharomyces cerevisiae: Then and now.</title>
        <authorList>
            <person name="Engel S.R."/>
            <person name="Dietrich F.S."/>
            <person name="Fisk D.G."/>
            <person name="Binkley G."/>
            <person name="Balakrishnan R."/>
            <person name="Costanzo M.C."/>
            <person name="Dwight S.S."/>
            <person name="Hitz B.C."/>
            <person name="Karra K."/>
            <person name="Nash R.S."/>
            <person name="Weng S."/>
            <person name="Wong E.D."/>
            <person name="Lloyd P."/>
            <person name="Skrzypek M.S."/>
            <person name="Miyasato S.R."/>
            <person name="Simison M."/>
            <person name="Cherry J.M."/>
        </authorList>
    </citation>
    <scope>GENOME REANNOTATION</scope>
    <source>
        <strain>ATCC 204508 / S288c</strain>
    </source>
</reference>
<reference key="3">
    <citation type="submission" date="1996-01" db="EMBL/GenBank/DDBJ databases">
        <authorList>
            <person name="Gromadka R."/>
        </authorList>
    </citation>
    <scope>SEQUENCE REVISION</scope>
</reference>
<protein>
    <recommendedName>
        <fullName>Putative uncharacterized protein YCL022C</fullName>
    </recommendedName>
</protein>
<name>YCC2_YEAST</name>
<gene>
    <name type="ordered locus">YCL022C</name>
    <name type="ORF">YCL22C</name>
</gene>
<feature type="chain" id="PRO_0000202541" description="Putative uncharacterized protein YCL022C">
    <location>
        <begin position="1"/>
        <end position="171"/>
    </location>
</feature>
<accession>P25562</accession>
<accession>O11850</accession>
<dbReference type="EMBL" id="X59720">
    <property type="status" value="NOT_ANNOTATED_CDS"/>
    <property type="molecule type" value="Genomic_DNA"/>
</dbReference>
<dbReference type="PIR" id="S74284">
    <property type="entry name" value="S74284"/>
</dbReference>
<dbReference type="DIP" id="DIP-4972N"/>
<dbReference type="IntAct" id="P25562">
    <property type="interactions" value="2"/>
</dbReference>
<dbReference type="AGR" id="SGD:S000000527"/>
<dbReference type="SGD" id="S000000527">
    <property type="gene designation" value="YCL022C"/>
</dbReference>
<proteinExistence type="uncertain"/>
<sequence length="171" mass="19573">MIILVMLNTRFFNPYCFQPSSSLCRPSYSLFSGILACISSSKILPFENFFKSTLLGGFFTVVGHSLCRYLSCHYLPSSHRLTGKQRFSHSQSLFPPHPLCFLRRCCYYLLRLGKVTLEGSLWYRPNPLAFFPWKELKDGSFTTSVGSALFDIGDWFGFLSFMSYSCDMPTP</sequence>
<comment type="miscellaneous">
    <text evidence="1">Completely overlaps KCC4.</text>
</comment>
<comment type="caution">
    <text evidence="2">Product of a dubious gene prediction unlikely to encode a functional protein. Because of that it is not part of the S.cerevisiae S288c complete/reference proteome set.</text>
</comment>
<organism>
    <name type="scientific">Saccharomyces cerevisiae (strain ATCC 204508 / S288c)</name>
    <name type="common">Baker's yeast</name>
    <dbReference type="NCBI Taxonomy" id="559292"/>
    <lineage>
        <taxon>Eukaryota</taxon>
        <taxon>Fungi</taxon>
        <taxon>Dikarya</taxon>
        <taxon>Ascomycota</taxon>
        <taxon>Saccharomycotina</taxon>
        <taxon>Saccharomycetes</taxon>
        <taxon>Saccharomycetales</taxon>
        <taxon>Saccharomycetaceae</taxon>
        <taxon>Saccharomyces</taxon>
    </lineage>
</organism>
<evidence type="ECO:0000305" key="1"/>
<evidence type="ECO:0000305" key="2">
    <source>
    </source>
</evidence>